<sequence>MKFHIIYPKPNIVYTNMLSVTAGCRNCSFDYVSSLFKKYVNKYYNVVSNVEYSMSLSTRLVIADLWYVLENINALSVPSRAVLWLDTAWVWSNRTVPSNARNYLVLTTSQWNADILTKLGIDNAIVPRAIDDDYAVKYFNNIVVNNNDDDNVIDKKHGDGDSEVDGKFNVSGDSSDVTSNVVTTNVIGDVTDNKKYDVVAIMTGSSDGHKNEQLLLKILDALHLRKTSFLVCALPQCDAKPFSLTDDEKYELLSQSRLFAWLSESEGFGIPPVEAMSVGTPVVHFDSIYVNTPLVNAPIHFPLSVHGFKKRESPTVHGKYFASPVYNFDEIVSEFKDALSVATSLTVKDRIALHEYVMRNYSHKVILPELKKYMGGSF</sequence>
<evidence type="ECO:0000305" key="1"/>
<gene>
    <name type="ORF">ORF378</name>
</gene>
<dbReference type="EC" id="2.4.-.-"/>
<dbReference type="EMBL" id="AJ854042">
    <property type="protein sequence ID" value="CAH69409.1"/>
    <property type="molecule type" value="Genomic_DNA"/>
</dbReference>
<dbReference type="RefSeq" id="YP_001496947.1">
    <property type="nucleotide sequence ID" value="NC_009884.1"/>
</dbReference>
<dbReference type="CAZy" id="GT4">
    <property type="family name" value="Glycosyltransferase Family 4"/>
</dbReference>
<dbReference type="KEGG" id="vg:5656086"/>
<dbReference type="Proteomes" id="UP000006364">
    <property type="component" value="Genome"/>
</dbReference>
<dbReference type="GO" id="GO:0016757">
    <property type="term" value="F:glycosyltransferase activity"/>
    <property type="evidence" value="ECO:0007669"/>
    <property type="project" value="UniProtKB-KW"/>
</dbReference>
<dbReference type="Gene3D" id="3.40.50.2000">
    <property type="entry name" value="Glycogen Phosphorylase B"/>
    <property type="match status" value="1"/>
</dbReference>
<dbReference type="InterPro" id="IPR001296">
    <property type="entry name" value="Glyco_trans_1"/>
</dbReference>
<dbReference type="Pfam" id="PF00534">
    <property type="entry name" value="Glycos_transf_1"/>
    <property type="match status" value="1"/>
</dbReference>
<dbReference type="SUPFAM" id="SSF53756">
    <property type="entry name" value="UDP-Glycosyltransferase/glycogen phosphorylase"/>
    <property type="match status" value="1"/>
</dbReference>
<organismHost>
    <name type="scientific">Acidianus sp. F28</name>
    <dbReference type="NCBI Taxonomy" id="315458"/>
</organismHost>
<comment type="similarity">
    <text evidence="1">Belongs to the glycosyltransferase group 1 family. Glycosyltransferase 4 subfamily.</text>
</comment>
<reference key="1">
    <citation type="journal article" date="2005" name="J. Bacteriol.">
        <title>Structure and genome organization of AFV2, a novel archaeal lipothrixvirus with unusual terminal and core structures.</title>
        <authorList>
            <person name="Haring M."/>
            <person name="Vestergaard G."/>
            <person name="Brugger K."/>
            <person name="Rachel R."/>
            <person name="Garrett R.A."/>
            <person name="Prangishvili D."/>
        </authorList>
    </citation>
    <scope>NUCLEOTIDE SEQUENCE [GENOMIC DNA]</scope>
</reference>
<feature type="chain" id="PRO_0000384481" description="Putative glycosyltransferase ORF378">
    <location>
        <begin position="1"/>
        <end position="378"/>
    </location>
</feature>
<name>GT378_AFV2P</name>
<protein>
    <recommendedName>
        <fullName>Putative glycosyltransferase ORF378</fullName>
        <ecNumber>2.4.-.-</ecNumber>
    </recommendedName>
</protein>
<proteinExistence type="inferred from homology"/>
<organism>
    <name type="scientific">Acidianus filamentous virus 2 (isolate Italy/Pozzuoli)</name>
    <name type="common">AFV-2</name>
    <dbReference type="NCBI Taxonomy" id="654910"/>
    <lineage>
        <taxon>Viruses</taxon>
        <taxon>Adnaviria</taxon>
        <taxon>Zilligvirae</taxon>
        <taxon>Taleaviricota</taxon>
        <taxon>Tokiviricetes</taxon>
        <taxon>Ligamenvirales</taxon>
        <taxon>Lipothrixviridae</taxon>
        <taxon>Deltalipothrixvirus</taxon>
        <taxon>Acidianus filamentous virus 2</taxon>
    </lineage>
</organism>
<accession>Q573E7</accession>
<keyword id="KW-0328">Glycosyltransferase</keyword>
<keyword id="KW-1185">Reference proteome</keyword>
<keyword id="KW-0808">Transferase</keyword>